<reference key="1">
    <citation type="journal article" date="2004" name="DNA Res.">
        <title>Complete nucleotide sequence of the sugarcane (Saccharum officinarum) chloroplast genome: a comparative analysis of four monocot chloroplast genomes.</title>
        <authorList>
            <person name="Asano T."/>
            <person name="Tsudzuki T."/>
            <person name="Takahashi S."/>
            <person name="Shimada H."/>
            <person name="Kadowaki K."/>
        </authorList>
    </citation>
    <scope>NUCLEOTIDE SEQUENCE [LARGE SCALE GENOMIC DNA]</scope>
</reference>
<sequence length="247" mass="27294">MNITPCSIKTLKGLYDISGVEVGQHFYWQIGGFQIHAQVLITSWVVITILLGSVIIAVRNPQTIPTDGQNFFEYVLEFIRDLSKTQIGEEYGPWVPFIGTMFLFIFVSNWSGALLPWKIIELPHGELAAPTNDINTTVALALLTSAAYFYAGLSKKGLSYFEKYIKPTPILLPINILEDFTKPLSLSFRLFGNILADELVVVVLVSLVPLVVPIPVMFLGLFTSGIQALIFATLAAAYIGESMEGHH</sequence>
<evidence type="ECO:0000255" key="1">
    <source>
        <dbReference type="HAMAP-Rule" id="MF_01393"/>
    </source>
</evidence>
<dbReference type="EMBL" id="AP006714">
    <property type="protein sequence ID" value="BAD27287.1"/>
    <property type="molecule type" value="Genomic_DNA"/>
</dbReference>
<dbReference type="RefSeq" id="YP_009389565.1">
    <property type="nucleotide sequence ID" value="NC_035224.1"/>
</dbReference>
<dbReference type="SMR" id="Q6ENW9"/>
<dbReference type="GeneID" id="33347850"/>
<dbReference type="GO" id="GO:0009535">
    <property type="term" value="C:chloroplast thylakoid membrane"/>
    <property type="evidence" value="ECO:0007669"/>
    <property type="project" value="UniProtKB-SubCell"/>
</dbReference>
<dbReference type="GO" id="GO:0005886">
    <property type="term" value="C:plasma membrane"/>
    <property type="evidence" value="ECO:0007669"/>
    <property type="project" value="UniProtKB-UniRule"/>
</dbReference>
<dbReference type="GO" id="GO:0045259">
    <property type="term" value="C:proton-transporting ATP synthase complex"/>
    <property type="evidence" value="ECO:0007669"/>
    <property type="project" value="UniProtKB-KW"/>
</dbReference>
<dbReference type="GO" id="GO:0046933">
    <property type="term" value="F:proton-transporting ATP synthase activity, rotational mechanism"/>
    <property type="evidence" value="ECO:0007669"/>
    <property type="project" value="UniProtKB-UniRule"/>
</dbReference>
<dbReference type="CDD" id="cd00310">
    <property type="entry name" value="ATP-synt_Fo_a_6"/>
    <property type="match status" value="1"/>
</dbReference>
<dbReference type="FunFam" id="1.20.120.220:FF:000001">
    <property type="entry name" value="ATP synthase subunit a, chloroplastic"/>
    <property type="match status" value="1"/>
</dbReference>
<dbReference type="Gene3D" id="1.20.120.220">
    <property type="entry name" value="ATP synthase, F0 complex, subunit A"/>
    <property type="match status" value="1"/>
</dbReference>
<dbReference type="HAMAP" id="MF_01393">
    <property type="entry name" value="ATP_synth_a_bact"/>
    <property type="match status" value="1"/>
</dbReference>
<dbReference type="InterPro" id="IPR045082">
    <property type="entry name" value="ATP_syn_F0_a_bact/chloroplast"/>
</dbReference>
<dbReference type="InterPro" id="IPR000568">
    <property type="entry name" value="ATP_synth_F0_asu"/>
</dbReference>
<dbReference type="InterPro" id="IPR023011">
    <property type="entry name" value="ATP_synth_F0_asu_AS"/>
</dbReference>
<dbReference type="InterPro" id="IPR035908">
    <property type="entry name" value="F0_ATP_A_sf"/>
</dbReference>
<dbReference type="NCBIfam" id="TIGR01131">
    <property type="entry name" value="ATP_synt_6_or_A"/>
    <property type="match status" value="1"/>
</dbReference>
<dbReference type="PANTHER" id="PTHR42823">
    <property type="entry name" value="ATP SYNTHASE SUBUNIT A, CHLOROPLASTIC"/>
    <property type="match status" value="1"/>
</dbReference>
<dbReference type="PANTHER" id="PTHR42823:SF3">
    <property type="entry name" value="ATP SYNTHASE SUBUNIT A, CHLOROPLASTIC"/>
    <property type="match status" value="1"/>
</dbReference>
<dbReference type="Pfam" id="PF00119">
    <property type="entry name" value="ATP-synt_A"/>
    <property type="match status" value="1"/>
</dbReference>
<dbReference type="PRINTS" id="PR00123">
    <property type="entry name" value="ATPASEA"/>
</dbReference>
<dbReference type="SUPFAM" id="SSF81336">
    <property type="entry name" value="F1F0 ATP synthase subunit A"/>
    <property type="match status" value="1"/>
</dbReference>
<dbReference type="PROSITE" id="PS00449">
    <property type="entry name" value="ATPASE_A"/>
    <property type="match status" value="1"/>
</dbReference>
<accession>Q6ENW9</accession>
<comment type="function">
    <text evidence="1">Key component of the proton channel; it plays a direct role in the translocation of protons across the membrane.</text>
</comment>
<comment type="subunit">
    <text evidence="1">F-type ATPases have 2 components, CF(1) - the catalytic core - and CF(0) - the membrane proton channel. CF(1) has five subunits: alpha(3), beta(3), gamma(1), delta(1), epsilon(1). CF(0) has four main subunits: a, b, b' and c.</text>
</comment>
<comment type="subcellular location">
    <subcellularLocation>
        <location evidence="1">Plastid</location>
        <location evidence="1">Chloroplast thylakoid membrane</location>
        <topology evidence="1">Multi-pass membrane protein</topology>
    </subcellularLocation>
</comment>
<comment type="similarity">
    <text evidence="1">Belongs to the ATPase A chain family.</text>
</comment>
<gene>
    <name evidence="1" type="primary">atpI</name>
</gene>
<geneLocation type="chloroplast"/>
<name>ATPI_SACOF</name>
<organism>
    <name type="scientific">Saccharum officinarum</name>
    <name type="common">Sugarcane</name>
    <dbReference type="NCBI Taxonomy" id="4547"/>
    <lineage>
        <taxon>Eukaryota</taxon>
        <taxon>Viridiplantae</taxon>
        <taxon>Streptophyta</taxon>
        <taxon>Embryophyta</taxon>
        <taxon>Tracheophyta</taxon>
        <taxon>Spermatophyta</taxon>
        <taxon>Magnoliopsida</taxon>
        <taxon>Liliopsida</taxon>
        <taxon>Poales</taxon>
        <taxon>Poaceae</taxon>
        <taxon>PACMAD clade</taxon>
        <taxon>Panicoideae</taxon>
        <taxon>Andropogonodae</taxon>
        <taxon>Andropogoneae</taxon>
        <taxon>Saccharinae</taxon>
        <taxon>Saccharum</taxon>
        <taxon>Saccharum officinarum species complex</taxon>
    </lineage>
</organism>
<protein>
    <recommendedName>
        <fullName evidence="1">ATP synthase subunit a, chloroplastic</fullName>
    </recommendedName>
    <alternativeName>
        <fullName evidence="1">ATP synthase F0 sector subunit a</fullName>
    </alternativeName>
    <alternativeName>
        <fullName evidence="1">F-ATPase subunit IV</fullName>
    </alternativeName>
</protein>
<feature type="chain" id="PRO_0000226903" description="ATP synthase subunit a, chloroplastic">
    <location>
        <begin position="1"/>
        <end position="247"/>
    </location>
</feature>
<feature type="transmembrane region" description="Helical" evidence="1">
    <location>
        <begin position="38"/>
        <end position="58"/>
    </location>
</feature>
<feature type="transmembrane region" description="Helical" evidence="1">
    <location>
        <begin position="95"/>
        <end position="115"/>
    </location>
</feature>
<feature type="transmembrane region" description="Helical" evidence="1">
    <location>
        <begin position="134"/>
        <end position="154"/>
    </location>
</feature>
<feature type="transmembrane region" description="Helical" evidence="1">
    <location>
        <begin position="199"/>
        <end position="219"/>
    </location>
</feature>
<feature type="transmembrane region" description="Helical" evidence="1">
    <location>
        <begin position="220"/>
        <end position="240"/>
    </location>
</feature>
<proteinExistence type="inferred from homology"/>
<keyword id="KW-0066">ATP synthesis</keyword>
<keyword id="KW-0138">CF(0)</keyword>
<keyword id="KW-0150">Chloroplast</keyword>
<keyword id="KW-0375">Hydrogen ion transport</keyword>
<keyword id="KW-0406">Ion transport</keyword>
<keyword id="KW-0472">Membrane</keyword>
<keyword id="KW-0934">Plastid</keyword>
<keyword id="KW-0793">Thylakoid</keyword>
<keyword id="KW-0812">Transmembrane</keyword>
<keyword id="KW-1133">Transmembrane helix</keyword>
<keyword id="KW-0813">Transport</keyword>